<feature type="chain" id="PRO_1000000222" description="Ribosome-binding factor A">
    <location>
        <begin position="1"/>
        <end position="116"/>
    </location>
</feature>
<sequence>MSSMRAERVGEQMKKELMDIINNKVKDPRVGFITITDVVLTNDLSQAKVFLTVLGNDKEVENTFKALDKAKGFIKSELGSRMRLRIMPELMYEYDQSIEYGNKIERMIQDLHKQDR</sequence>
<proteinExistence type="inferred from homology"/>
<gene>
    <name evidence="1" type="primary">rbfA</name>
    <name type="ordered locus">SAB1132</name>
</gene>
<keyword id="KW-0963">Cytoplasm</keyword>
<keyword id="KW-0690">Ribosome biogenesis</keyword>
<organism>
    <name type="scientific">Staphylococcus aureus (strain bovine RF122 / ET3-1)</name>
    <dbReference type="NCBI Taxonomy" id="273036"/>
    <lineage>
        <taxon>Bacteria</taxon>
        <taxon>Bacillati</taxon>
        <taxon>Bacillota</taxon>
        <taxon>Bacilli</taxon>
        <taxon>Bacillales</taxon>
        <taxon>Staphylococcaceae</taxon>
        <taxon>Staphylococcus</taxon>
    </lineage>
</organism>
<dbReference type="EMBL" id="AJ938182">
    <property type="protein sequence ID" value="CAI80821.1"/>
    <property type="molecule type" value="Genomic_DNA"/>
</dbReference>
<dbReference type="RefSeq" id="WP_000097322.1">
    <property type="nucleotide sequence ID" value="NC_007622.1"/>
</dbReference>
<dbReference type="SMR" id="Q2YXP6"/>
<dbReference type="KEGG" id="sab:SAB1132"/>
<dbReference type="HOGENOM" id="CLU_089475_6_3_9"/>
<dbReference type="GO" id="GO:0005829">
    <property type="term" value="C:cytosol"/>
    <property type="evidence" value="ECO:0007669"/>
    <property type="project" value="TreeGrafter"/>
</dbReference>
<dbReference type="GO" id="GO:0043024">
    <property type="term" value="F:ribosomal small subunit binding"/>
    <property type="evidence" value="ECO:0007669"/>
    <property type="project" value="TreeGrafter"/>
</dbReference>
<dbReference type="GO" id="GO:0030490">
    <property type="term" value="P:maturation of SSU-rRNA"/>
    <property type="evidence" value="ECO:0007669"/>
    <property type="project" value="UniProtKB-UniRule"/>
</dbReference>
<dbReference type="FunFam" id="3.30.300.20:FF:000009">
    <property type="entry name" value="Ribosome-binding factor A"/>
    <property type="match status" value="1"/>
</dbReference>
<dbReference type="Gene3D" id="3.30.300.20">
    <property type="match status" value="1"/>
</dbReference>
<dbReference type="HAMAP" id="MF_00003">
    <property type="entry name" value="RbfA"/>
    <property type="match status" value="1"/>
</dbReference>
<dbReference type="InterPro" id="IPR015946">
    <property type="entry name" value="KH_dom-like_a/b"/>
</dbReference>
<dbReference type="InterPro" id="IPR000238">
    <property type="entry name" value="RbfA"/>
</dbReference>
<dbReference type="InterPro" id="IPR023799">
    <property type="entry name" value="RbfA_dom_sf"/>
</dbReference>
<dbReference type="InterPro" id="IPR020053">
    <property type="entry name" value="Ribosome-bd_factorA_CS"/>
</dbReference>
<dbReference type="NCBIfam" id="TIGR00082">
    <property type="entry name" value="rbfA"/>
    <property type="match status" value="1"/>
</dbReference>
<dbReference type="PANTHER" id="PTHR33515">
    <property type="entry name" value="RIBOSOME-BINDING FACTOR A, CHLOROPLASTIC-RELATED"/>
    <property type="match status" value="1"/>
</dbReference>
<dbReference type="PANTHER" id="PTHR33515:SF1">
    <property type="entry name" value="RIBOSOME-BINDING FACTOR A, CHLOROPLASTIC-RELATED"/>
    <property type="match status" value="1"/>
</dbReference>
<dbReference type="Pfam" id="PF02033">
    <property type="entry name" value="RBFA"/>
    <property type="match status" value="1"/>
</dbReference>
<dbReference type="SUPFAM" id="SSF89919">
    <property type="entry name" value="Ribosome-binding factor A, RbfA"/>
    <property type="match status" value="1"/>
</dbReference>
<dbReference type="PROSITE" id="PS01319">
    <property type="entry name" value="RBFA"/>
    <property type="match status" value="1"/>
</dbReference>
<comment type="function">
    <text evidence="1">One of several proteins that assist in the late maturation steps of the functional core of the 30S ribosomal subunit. Associates with free 30S ribosomal subunits (but not with 30S subunits that are part of 70S ribosomes or polysomes). Required for efficient processing of 16S rRNA. May interact with the 5'-terminal helix region of 16S rRNA.</text>
</comment>
<comment type="subunit">
    <text evidence="1">Monomer. Binds 30S ribosomal subunits, but not 50S ribosomal subunits or 70S ribosomes.</text>
</comment>
<comment type="subcellular location">
    <subcellularLocation>
        <location evidence="1">Cytoplasm</location>
    </subcellularLocation>
</comment>
<comment type="similarity">
    <text evidence="1">Belongs to the RbfA family.</text>
</comment>
<evidence type="ECO:0000255" key="1">
    <source>
        <dbReference type="HAMAP-Rule" id="MF_00003"/>
    </source>
</evidence>
<reference key="1">
    <citation type="journal article" date="2007" name="PLoS ONE">
        <title>Molecular correlates of host specialization in Staphylococcus aureus.</title>
        <authorList>
            <person name="Herron-Olson L."/>
            <person name="Fitzgerald J.R."/>
            <person name="Musser J.M."/>
            <person name="Kapur V."/>
        </authorList>
    </citation>
    <scope>NUCLEOTIDE SEQUENCE [LARGE SCALE GENOMIC DNA]</scope>
    <source>
        <strain>bovine RF122 / ET3-1</strain>
    </source>
</reference>
<protein>
    <recommendedName>
        <fullName evidence="1">Ribosome-binding factor A</fullName>
    </recommendedName>
</protein>
<accession>Q2YXP6</accession>
<name>RBFA_STAAB</name>